<protein>
    <recommendedName>
        <fullName evidence="5">Delta-actitoxin-Aeq2b 3</fullName>
        <shortName evidence="5">Delta-AITX-Aeq2b 3</shortName>
    </recommendedName>
    <alternativeName>
        <fullName evidence="4">Ae2-3</fullName>
    </alternativeName>
    <alternativeName>
        <fullName evidence="7">Neurotoxin 2-3</fullName>
    </alternativeName>
</protein>
<proteinExistence type="inferred from homology"/>
<dbReference type="EMBL" id="EU124481">
    <property type="protein sequence ID" value="ABW97360.1"/>
    <property type="molecule type" value="Genomic_DNA"/>
</dbReference>
<dbReference type="SMR" id="B1NWU4"/>
<dbReference type="GO" id="GO:0005576">
    <property type="term" value="C:extracellular region"/>
    <property type="evidence" value="ECO:0007669"/>
    <property type="project" value="UniProtKB-SubCell"/>
</dbReference>
<dbReference type="GO" id="GO:0042151">
    <property type="term" value="C:nematocyst"/>
    <property type="evidence" value="ECO:0007669"/>
    <property type="project" value="UniProtKB-SubCell"/>
</dbReference>
<dbReference type="GO" id="GO:0017080">
    <property type="term" value="F:sodium channel regulator activity"/>
    <property type="evidence" value="ECO:0007669"/>
    <property type="project" value="UniProtKB-KW"/>
</dbReference>
<dbReference type="GO" id="GO:0090729">
    <property type="term" value="F:toxin activity"/>
    <property type="evidence" value="ECO:0007669"/>
    <property type="project" value="UniProtKB-KW"/>
</dbReference>
<dbReference type="Gene3D" id="2.20.20.10">
    <property type="entry name" value="Anthopleurin-A"/>
    <property type="match status" value="1"/>
</dbReference>
<dbReference type="InterPro" id="IPR023355">
    <property type="entry name" value="Myo_ane_neurotoxin_sf"/>
</dbReference>
<dbReference type="Pfam" id="PF00706">
    <property type="entry name" value="Toxin_4"/>
    <property type="match status" value="1"/>
</dbReference>
<dbReference type="SUPFAM" id="SSF57392">
    <property type="entry name" value="Defensin-like"/>
    <property type="match status" value="1"/>
</dbReference>
<evidence type="ECO:0000250" key="1">
    <source>
        <dbReference type="UniProtKB" id="P01530"/>
    </source>
</evidence>
<evidence type="ECO:0000250" key="2">
    <source>
        <dbReference type="UniProtKB" id="Q9NJQ2"/>
    </source>
</evidence>
<evidence type="ECO:0000255" key="3"/>
<evidence type="ECO:0000303" key="4">
    <source>
    </source>
</evidence>
<evidence type="ECO:0000303" key="5">
    <source>
    </source>
</evidence>
<evidence type="ECO:0000305" key="6"/>
<evidence type="ECO:0000312" key="7">
    <source>
        <dbReference type="EMBL" id="ABW97360.1"/>
    </source>
</evidence>
<feature type="signal peptide" evidence="3">
    <location>
        <begin position="1"/>
        <end position="19"/>
    </location>
</feature>
<feature type="propeptide" id="PRO_0000433577" evidence="2">
    <location>
        <begin position="20"/>
        <end position="26"/>
    </location>
</feature>
<feature type="chain" id="PRO_5000319688" description="Delta-actitoxin-Aeq2b 3" evidence="1">
    <location>
        <begin position="29"/>
        <end position="82"/>
    </location>
</feature>
<feature type="disulfide bond" evidence="1">
    <location>
        <begin position="32"/>
        <end position="79"/>
    </location>
</feature>
<feature type="disulfide bond" evidence="1">
    <location>
        <begin position="34"/>
        <end position="69"/>
    </location>
</feature>
<feature type="disulfide bond" evidence="1">
    <location>
        <begin position="62"/>
        <end position="80"/>
    </location>
</feature>
<accession>B1NWU4</accession>
<reference key="1">
    <citation type="journal article" date="2008" name="Mol. Biol. Evol.">
        <title>Concerted evolution of sea anemone neurotoxin genes is revealed through analysis of the Nematostella vectensis genome.</title>
        <authorList>
            <person name="Moran Y."/>
            <person name="Weinberger H."/>
            <person name="Sullivan J.C."/>
            <person name="Reitzel A.M."/>
            <person name="Finnerty J.R."/>
            <person name="Gurevitz M."/>
        </authorList>
    </citation>
    <scope>NUCLEOTIDE SEQUENCE [GENOMIC DNA]</scope>
</reference>
<reference key="2">
    <citation type="journal article" date="2012" name="Toxicon">
        <title>Development of a rational nomenclature for naming peptide and protein toxins from sea anemones.</title>
        <authorList>
            <person name="Oliveira J.S."/>
            <person name="Fuentes-Silva D."/>
            <person name="King G.F."/>
        </authorList>
    </citation>
    <scope>NOMENCLATURE</scope>
</reference>
<name>NA123_ACTEQ</name>
<comment type="function">
    <text evidence="2">Binds specifically to voltage-gated sodium channels (Nav), thereby delaying their inactivation during signal transduction. Causes death to crabs.</text>
</comment>
<comment type="subcellular location">
    <subcellularLocation>
        <location evidence="6">Secreted</location>
    </subcellularLocation>
    <subcellularLocation>
        <location evidence="6">Nematocyst</location>
    </subcellularLocation>
</comment>
<comment type="similarity">
    <text evidence="6">Belongs to the sea anemone sodium channel inhibitory toxin family. Type I subfamily.</text>
</comment>
<sequence length="82" mass="8855">MNRLMILVFAAVILALASADEDVDITKRGVPCLCVSDGPRPRGNNLSGIMWMKTGGYGGNGCPKGWHFCGKSRGFFSDCCKR</sequence>
<organism>
    <name type="scientific">Actinia equina</name>
    <name type="common">Beadlet anemone</name>
    <dbReference type="NCBI Taxonomy" id="6106"/>
    <lineage>
        <taxon>Eukaryota</taxon>
        <taxon>Metazoa</taxon>
        <taxon>Cnidaria</taxon>
        <taxon>Anthozoa</taxon>
        <taxon>Hexacorallia</taxon>
        <taxon>Actiniaria</taxon>
        <taxon>Actiniidae</taxon>
        <taxon>Actinia</taxon>
    </lineage>
</organism>
<keyword id="KW-0165">Cleavage on pair of basic residues</keyword>
<keyword id="KW-1015">Disulfide bond</keyword>
<keyword id="KW-0872">Ion channel impairing toxin</keyword>
<keyword id="KW-0166">Nematocyst</keyword>
<keyword id="KW-0528">Neurotoxin</keyword>
<keyword id="KW-0964">Secreted</keyword>
<keyword id="KW-0732">Signal</keyword>
<keyword id="KW-0800">Toxin</keyword>
<keyword id="KW-0738">Voltage-gated sodium channel impairing toxin</keyword>